<accession>B1LK55</accession>
<feature type="chain" id="PRO_1000130551" description="L-threonine 3-dehydrogenase">
    <location>
        <begin position="1"/>
        <end position="341"/>
    </location>
</feature>
<feature type="active site" description="Charge relay system" evidence="1">
    <location>
        <position position="40"/>
    </location>
</feature>
<feature type="active site" description="Charge relay system" evidence="1">
    <location>
        <position position="43"/>
    </location>
</feature>
<feature type="binding site" evidence="1">
    <location>
        <position position="38"/>
    </location>
    <ligand>
        <name>Zn(2+)</name>
        <dbReference type="ChEBI" id="CHEBI:29105"/>
        <label>1</label>
        <note>catalytic</note>
    </ligand>
</feature>
<feature type="binding site" evidence="1">
    <location>
        <position position="63"/>
    </location>
    <ligand>
        <name>Zn(2+)</name>
        <dbReference type="ChEBI" id="CHEBI:29105"/>
        <label>1</label>
        <note>catalytic</note>
    </ligand>
</feature>
<feature type="binding site" evidence="1">
    <location>
        <position position="64"/>
    </location>
    <ligand>
        <name>Zn(2+)</name>
        <dbReference type="ChEBI" id="CHEBI:29105"/>
        <label>1</label>
        <note>catalytic</note>
    </ligand>
</feature>
<feature type="binding site" evidence="1">
    <location>
        <position position="93"/>
    </location>
    <ligand>
        <name>Zn(2+)</name>
        <dbReference type="ChEBI" id="CHEBI:29105"/>
        <label>2</label>
    </ligand>
</feature>
<feature type="binding site" evidence="1">
    <location>
        <position position="96"/>
    </location>
    <ligand>
        <name>Zn(2+)</name>
        <dbReference type="ChEBI" id="CHEBI:29105"/>
        <label>2</label>
    </ligand>
</feature>
<feature type="binding site" evidence="1">
    <location>
        <position position="99"/>
    </location>
    <ligand>
        <name>Zn(2+)</name>
        <dbReference type="ChEBI" id="CHEBI:29105"/>
        <label>2</label>
    </ligand>
</feature>
<feature type="binding site" evidence="1">
    <location>
        <position position="107"/>
    </location>
    <ligand>
        <name>Zn(2+)</name>
        <dbReference type="ChEBI" id="CHEBI:29105"/>
        <label>2</label>
    </ligand>
</feature>
<feature type="binding site" evidence="1">
    <location>
        <position position="175"/>
    </location>
    <ligand>
        <name>NAD(+)</name>
        <dbReference type="ChEBI" id="CHEBI:57540"/>
    </ligand>
</feature>
<feature type="binding site" evidence="1">
    <location>
        <position position="195"/>
    </location>
    <ligand>
        <name>NAD(+)</name>
        <dbReference type="ChEBI" id="CHEBI:57540"/>
    </ligand>
</feature>
<feature type="binding site" evidence="1">
    <location>
        <position position="200"/>
    </location>
    <ligand>
        <name>NAD(+)</name>
        <dbReference type="ChEBI" id="CHEBI:57540"/>
    </ligand>
</feature>
<feature type="binding site" evidence="1">
    <location>
        <begin position="262"/>
        <end position="264"/>
    </location>
    <ligand>
        <name>NAD(+)</name>
        <dbReference type="ChEBI" id="CHEBI:57540"/>
    </ligand>
</feature>
<feature type="binding site" evidence="1">
    <location>
        <begin position="286"/>
        <end position="287"/>
    </location>
    <ligand>
        <name>NAD(+)</name>
        <dbReference type="ChEBI" id="CHEBI:57540"/>
    </ligand>
</feature>
<feature type="site" description="Important for catalytic activity for the proton relay mechanism but does not participate directly in the coordination of zinc atom" evidence="1">
    <location>
        <position position="148"/>
    </location>
</feature>
<protein>
    <recommendedName>
        <fullName evidence="1">L-threonine 3-dehydrogenase</fullName>
        <shortName evidence="1">TDH</shortName>
        <ecNumber evidence="1">1.1.1.103</ecNumber>
    </recommendedName>
</protein>
<dbReference type="EC" id="1.1.1.103" evidence="1"/>
<dbReference type="EMBL" id="CP000970">
    <property type="protein sequence ID" value="ACB19735.1"/>
    <property type="molecule type" value="Genomic_DNA"/>
</dbReference>
<dbReference type="RefSeq" id="WP_000646018.1">
    <property type="nucleotide sequence ID" value="NC_010498.1"/>
</dbReference>
<dbReference type="SMR" id="B1LK55"/>
<dbReference type="KEGG" id="ecm:EcSMS35_3953"/>
<dbReference type="HOGENOM" id="CLU_026673_11_0_6"/>
<dbReference type="UniPathway" id="UPA00046">
    <property type="reaction ID" value="UER00505"/>
</dbReference>
<dbReference type="Proteomes" id="UP000007011">
    <property type="component" value="Chromosome"/>
</dbReference>
<dbReference type="GO" id="GO:0005737">
    <property type="term" value="C:cytoplasm"/>
    <property type="evidence" value="ECO:0007669"/>
    <property type="project" value="UniProtKB-SubCell"/>
</dbReference>
<dbReference type="GO" id="GO:0008743">
    <property type="term" value="F:L-threonine 3-dehydrogenase activity"/>
    <property type="evidence" value="ECO:0007669"/>
    <property type="project" value="UniProtKB-UniRule"/>
</dbReference>
<dbReference type="GO" id="GO:0008270">
    <property type="term" value="F:zinc ion binding"/>
    <property type="evidence" value="ECO:0007669"/>
    <property type="project" value="UniProtKB-UniRule"/>
</dbReference>
<dbReference type="GO" id="GO:0019518">
    <property type="term" value="P:L-threonine catabolic process to glycine"/>
    <property type="evidence" value="ECO:0007669"/>
    <property type="project" value="UniProtKB-UniPathway"/>
</dbReference>
<dbReference type="FunFam" id="3.40.50.720:FF:000059">
    <property type="entry name" value="L-threonine 3-dehydrogenase"/>
    <property type="match status" value="1"/>
</dbReference>
<dbReference type="Gene3D" id="3.90.180.10">
    <property type="entry name" value="Medium-chain alcohol dehydrogenases, catalytic domain"/>
    <property type="match status" value="1"/>
</dbReference>
<dbReference type="Gene3D" id="3.40.50.720">
    <property type="entry name" value="NAD(P)-binding Rossmann-like Domain"/>
    <property type="match status" value="1"/>
</dbReference>
<dbReference type="HAMAP" id="MF_00627">
    <property type="entry name" value="Thr_dehydrog"/>
    <property type="match status" value="1"/>
</dbReference>
<dbReference type="InterPro" id="IPR013149">
    <property type="entry name" value="ADH-like_C"/>
</dbReference>
<dbReference type="InterPro" id="IPR013154">
    <property type="entry name" value="ADH-like_N"/>
</dbReference>
<dbReference type="InterPro" id="IPR002328">
    <property type="entry name" value="ADH_Zn_CS"/>
</dbReference>
<dbReference type="InterPro" id="IPR011032">
    <property type="entry name" value="GroES-like_sf"/>
</dbReference>
<dbReference type="InterPro" id="IPR004627">
    <property type="entry name" value="L-Threonine_3-DHase"/>
</dbReference>
<dbReference type="InterPro" id="IPR036291">
    <property type="entry name" value="NAD(P)-bd_dom_sf"/>
</dbReference>
<dbReference type="InterPro" id="IPR020843">
    <property type="entry name" value="PKS_ER"/>
</dbReference>
<dbReference type="InterPro" id="IPR050129">
    <property type="entry name" value="Zn_alcohol_dh"/>
</dbReference>
<dbReference type="NCBIfam" id="NF003808">
    <property type="entry name" value="PRK05396.1"/>
    <property type="match status" value="1"/>
</dbReference>
<dbReference type="NCBIfam" id="TIGR00692">
    <property type="entry name" value="tdh"/>
    <property type="match status" value="1"/>
</dbReference>
<dbReference type="PANTHER" id="PTHR43401">
    <property type="entry name" value="L-THREONINE 3-DEHYDROGENASE"/>
    <property type="match status" value="1"/>
</dbReference>
<dbReference type="PANTHER" id="PTHR43401:SF2">
    <property type="entry name" value="L-THREONINE 3-DEHYDROGENASE"/>
    <property type="match status" value="1"/>
</dbReference>
<dbReference type="Pfam" id="PF08240">
    <property type="entry name" value="ADH_N"/>
    <property type="match status" value="1"/>
</dbReference>
<dbReference type="Pfam" id="PF00107">
    <property type="entry name" value="ADH_zinc_N"/>
    <property type="match status" value="1"/>
</dbReference>
<dbReference type="SMART" id="SM00829">
    <property type="entry name" value="PKS_ER"/>
    <property type="match status" value="1"/>
</dbReference>
<dbReference type="SUPFAM" id="SSF50129">
    <property type="entry name" value="GroES-like"/>
    <property type="match status" value="1"/>
</dbReference>
<dbReference type="SUPFAM" id="SSF51735">
    <property type="entry name" value="NAD(P)-binding Rossmann-fold domains"/>
    <property type="match status" value="1"/>
</dbReference>
<dbReference type="PROSITE" id="PS00059">
    <property type="entry name" value="ADH_ZINC"/>
    <property type="match status" value="1"/>
</dbReference>
<gene>
    <name evidence="1" type="primary">tdh</name>
    <name type="ordered locus">EcSMS35_3953</name>
</gene>
<sequence>MKALSKLKAEEGIWMTDVPVPELGHNDLLIKIRKTAICGTDVHIYNWDEWSQKTIPVPMVVGHEYVGEVVGIGQEVKGFKIGDRVSGEGHITCGHCRNCRGGRTHLCRNTIGVGVNRPGCFAEYLVIPAFNAFKIPDNISDDLASIFDPFGNAVHTALSFDLVGEDVLVSGAGPIGIMAAAVAKHVGARNVVITDVNEYRLELARKMGITRAVNVAKENLNDVMTELGMTEGFDVGLEMSGAPPAFRTMLDTMNHGGRIAMLGIPPSDMSIDWTKVIFKGLFIKGIYGREMFETWYKMAALIQSGLDLSPIITHRFSIDDFQKGFDAMRSGQSGKVILSWD</sequence>
<comment type="function">
    <text evidence="1">Catalyzes the NAD(+)-dependent oxidation of L-threonine to 2-amino-3-ketobutyrate.</text>
</comment>
<comment type="catalytic activity">
    <reaction evidence="1">
        <text>L-threonine + NAD(+) = (2S)-2-amino-3-oxobutanoate + NADH + H(+)</text>
        <dbReference type="Rhea" id="RHEA:13161"/>
        <dbReference type="ChEBI" id="CHEBI:15378"/>
        <dbReference type="ChEBI" id="CHEBI:57540"/>
        <dbReference type="ChEBI" id="CHEBI:57926"/>
        <dbReference type="ChEBI" id="CHEBI:57945"/>
        <dbReference type="ChEBI" id="CHEBI:78948"/>
        <dbReference type="EC" id="1.1.1.103"/>
    </reaction>
</comment>
<comment type="cofactor">
    <cofactor evidence="1">
        <name>Zn(2+)</name>
        <dbReference type="ChEBI" id="CHEBI:29105"/>
    </cofactor>
    <text evidence="1">Binds 2 Zn(2+) ions per subunit.</text>
</comment>
<comment type="pathway">
    <text evidence="1">Amino-acid degradation; L-threonine degradation via oxydo-reductase pathway; glycine from L-threonine: step 1/2.</text>
</comment>
<comment type="subunit">
    <text evidence="1">Homotetramer.</text>
</comment>
<comment type="subcellular location">
    <subcellularLocation>
        <location evidence="1">Cytoplasm</location>
    </subcellularLocation>
</comment>
<comment type="similarity">
    <text evidence="1">Belongs to the zinc-containing alcohol dehydrogenase family.</text>
</comment>
<name>TDH_ECOSM</name>
<reference key="1">
    <citation type="journal article" date="2008" name="J. Bacteriol.">
        <title>Insights into the environmental resistance gene pool from the genome sequence of the multidrug-resistant environmental isolate Escherichia coli SMS-3-5.</title>
        <authorList>
            <person name="Fricke W.F."/>
            <person name="Wright M.S."/>
            <person name="Lindell A.H."/>
            <person name="Harkins D.M."/>
            <person name="Baker-Austin C."/>
            <person name="Ravel J."/>
            <person name="Stepanauskas R."/>
        </authorList>
    </citation>
    <scope>NUCLEOTIDE SEQUENCE [LARGE SCALE GENOMIC DNA]</scope>
    <source>
        <strain>SMS-3-5 / SECEC</strain>
    </source>
</reference>
<keyword id="KW-0963">Cytoplasm</keyword>
<keyword id="KW-0479">Metal-binding</keyword>
<keyword id="KW-0520">NAD</keyword>
<keyword id="KW-0560">Oxidoreductase</keyword>
<keyword id="KW-0862">Zinc</keyword>
<organism>
    <name type="scientific">Escherichia coli (strain SMS-3-5 / SECEC)</name>
    <dbReference type="NCBI Taxonomy" id="439855"/>
    <lineage>
        <taxon>Bacteria</taxon>
        <taxon>Pseudomonadati</taxon>
        <taxon>Pseudomonadota</taxon>
        <taxon>Gammaproteobacteria</taxon>
        <taxon>Enterobacterales</taxon>
        <taxon>Enterobacteriaceae</taxon>
        <taxon>Escherichia</taxon>
    </lineage>
</organism>
<proteinExistence type="inferred from homology"/>
<evidence type="ECO:0000255" key="1">
    <source>
        <dbReference type="HAMAP-Rule" id="MF_00627"/>
    </source>
</evidence>